<dbReference type="EC" id="4.1.1.48"/>
<dbReference type="EC" id="5.3.1.24"/>
<dbReference type="EMBL" id="Z19055">
    <property type="protein sequence ID" value="CAA79499.1"/>
    <property type="molecule type" value="Genomic_DNA"/>
</dbReference>
<dbReference type="EMBL" id="AE013218">
    <property type="protein sequence ID" value="AAM67826.1"/>
    <property type="molecule type" value="Genomic_DNA"/>
</dbReference>
<dbReference type="PIR" id="B49897">
    <property type="entry name" value="B49897"/>
</dbReference>
<dbReference type="RefSeq" id="WP_011053793.1">
    <property type="nucleotide sequence ID" value="NC_004061.1"/>
</dbReference>
<dbReference type="SMR" id="P42393"/>
<dbReference type="STRING" id="198804.BUsg_268"/>
<dbReference type="GeneID" id="93003738"/>
<dbReference type="KEGG" id="bas:BUsg_268"/>
<dbReference type="eggNOG" id="COG0134">
    <property type="taxonomic scope" value="Bacteria"/>
</dbReference>
<dbReference type="eggNOG" id="COG0135">
    <property type="taxonomic scope" value="Bacteria"/>
</dbReference>
<dbReference type="HOGENOM" id="CLU_007713_3_1_6"/>
<dbReference type="UniPathway" id="UPA00035">
    <property type="reaction ID" value="UER00042"/>
</dbReference>
<dbReference type="UniPathway" id="UPA00035">
    <property type="reaction ID" value="UER00043"/>
</dbReference>
<dbReference type="Proteomes" id="UP000000416">
    <property type="component" value="Chromosome"/>
</dbReference>
<dbReference type="GO" id="GO:0004425">
    <property type="term" value="F:indole-3-glycerol-phosphate synthase activity"/>
    <property type="evidence" value="ECO:0007669"/>
    <property type="project" value="UniProtKB-UniRule"/>
</dbReference>
<dbReference type="GO" id="GO:0004640">
    <property type="term" value="F:phosphoribosylanthranilate isomerase activity"/>
    <property type="evidence" value="ECO:0007669"/>
    <property type="project" value="UniProtKB-UniRule"/>
</dbReference>
<dbReference type="GO" id="GO:0000162">
    <property type="term" value="P:L-tryptophan biosynthetic process"/>
    <property type="evidence" value="ECO:0007669"/>
    <property type="project" value="UniProtKB-UniRule"/>
</dbReference>
<dbReference type="CDD" id="cd00331">
    <property type="entry name" value="IGPS"/>
    <property type="match status" value="1"/>
</dbReference>
<dbReference type="CDD" id="cd00405">
    <property type="entry name" value="PRAI"/>
    <property type="match status" value="1"/>
</dbReference>
<dbReference type="FunFam" id="3.20.20.70:FF:000024">
    <property type="entry name" value="Indole-3-glycerol phosphate synthase"/>
    <property type="match status" value="1"/>
</dbReference>
<dbReference type="Gene3D" id="3.20.20.70">
    <property type="entry name" value="Aldolase class I"/>
    <property type="match status" value="2"/>
</dbReference>
<dbReference type="HAMAP" id="MF_00134_B">
    <property type="entry name" value="IGPS_B"/>
    <property type="match status" value="1"/>
</dbReference>
<dbReference type="HAMAP" id="MF_00135">
    <property type="entry name" value="PRAI"/>
    <property type="match status" value="1"/>
</dbReference>
<dbReference type="InterPro" id="IPR013785">
    <property type="entry name" value="Aldolase_TIM"/>
</dbReference>
<dbReference type="InterPro" id="IPR045186">
    <property type="entry name" value="Indole-3-glycerol_P_synth"/>
</dbReference>
<dbReference type="InterPro" id="IPR013798">
    <property type="entry name" value="Indole-3-glycerol_P_synth_dom"/>
</dbReference>
<dbReference type="InterPro" id="IPR001468">
    <property type="entry name" value="Indole-3-GlycerolPSynthase_CS"/>
</dbReference>
<dbReference type="InterPro" id="IPR001240">
    <property type="entry name" value="PRAI_dom"/>
</dbReference>
<dbReference type="InterPro" id="IPR011060">
    <property type="entry name" value="RibuloseP-bd_barrel"/>
</dbReference>
<dbReference type="NCBIfam" id="NF006945">
    <property type="entry name" value="PRK09427.1"/>
    <property type="match status" value="1"/>
</dbReference>
<dbReference type="PANTHER" id="PTHR22854:SF2">
    <property type="entry name" value="INDOLE-3-GLYCEROL-PHOSPHATE SYNTHASE"/>
    <property type="match status" value="1"/>
</dbReference>
<dbReference type="PANTHER" id="PTHR22854">
    <property type="entry name" value="TRYPTOPHAN BIOSYNTHESIS PROTEIN"/>
    <property type="match status" value="1"/>
</dbReference>
<dbReference type="Pfam" id="PF00218">
    <property type="entry name" value="IGPS"/>
    <property type="match status" value="1"/>
</dbReference>
<dbReference type="Pfam" id="PF00697">
    <property type="entry name" value="PRAI"/>
    <property type="match status" value="1"/>
</dbReference>
<dbReference type="SUPFAM" id="SSF51366">
    <property type="entry name" value="Ribulose-phoshate binding barrel"/>
    <property type="match status" value="2"/>
</dbReference>
<dbReference type="PROSITE" id="PS00614">
    <property type="entry name" value="IGPS"/>
    <property type="match status" value="1"/>
</dbReference>
<accession>P42393</accession>
<feature type="chain" id="PRO_0000154272" description="Tryptophan biosynthesis protein TrpCF">
    <location>
        <begin position="1"/>
        <end position="451"/>
    </location>
</feature>
<feature type="region of interest" description="Indole-3-glycerol phosphate synthase">
    <location>
        <begin position="1"/>
        <end position="256"/>
    </location>
</feature>
<feature type="region of interest" description="N-(5'-phosphoribosyl)anthranilate isomerase">
    <location>
        <begin position="257"/>
        <end position="451"/>
    </location>
</feature>
<organism>
    <name type="scientific">Buchnera aphidicola subsp. Schizaphis graminum (strain Sg)</name>
    <dbReference type="NCBI Taxonomy" id="198804"/>
    <lineage>
        <taxon>Bacteria</taxon>
        <taxon>Pseudomonadati</taxon>
        <taxon>Pseudomonadota</taxon>
        <taxon>Gammaproteobacteria</taxon>
        <taxon>Enterobacterales</taxon>
        <taxon>Erwiniaceae</taxon>
        <taxon>Buchnera</taxon>
    </lineage>
</organism>
<name>TRPC_BUCAP</name>
<reference key="1">
    <citation type="journal article" date="1993" name="J. Bacteriol.">
        <title>Molecular cloning and nucleotide sequence of a putative trpDC(F)BA operon in Buchnera aphidicola (endosymbiont of the aphid Schizaphis graminum).</title>
        <authorList>
            <person name="Munson M.A."/>
            <person name="Baumann P."/>
        </authorList>
    </citation>
    <scope>NUCLEOTIDE SEQUENCE [GENOMIC DNA]</scope>
</reference>
<reference key="2">
    <citation type="journal article" date="2002" name="Science">
        <title>50 million years of genomic stasis in endosymbiotic bacteria.</title>
        <authorList>
            <person name="Tamas I."/>
            <person name="Klasson L."/>
            <person name="Canbaeck B."/>
            <person name="Naeslund A.K."/>
            <person name="Eriksson A.-S."/>
            <person name="Wernegreen J.J."/>
            <person name="Sandstroem J.P."/>
            <person name="Moran N.A."/>
            <person name="Andersson S.G.E."/>
        </authorList>
    </citation>
    <scope>NUCLEOTIDE SEQUENCE [LARGE SCALE GENOMIC DNA]</scope>
    <source>
        <strain>Sg</strain>
    </source>
</reference>
<sequence>MQETILNKIIKDKIDWIKYRKKIQPLIKFKNKINKETRNFYNSLKEKRPFFILECKKSSPSLGIIRKKFNLIEIANIYKNYASAISVLTDEKYFHGNIEYINVVRRCVSQPILCKDFFIDSYQVYLARYYSADAILLMLSVLNDSQYLELSRIAKELNMGVLTEINNIKELKRAIKLNASVIGINNRNLHDLSIDLNRTRTLSPLIKNKIIVSESGIKKNHQIKELSNIVHGFLIGSSLMYRTNLETNIKSLIIGDNKVCGLTRIIDAKIVESCGAVYGGLIFADNSLRKTNEKIAEKMIFENNLRFIGVFQNQDIEKIVNIAQRLSLYAVQLHGSENQKYINILRKKLCKKIKIWKAFSIQSTLPLLNWDHIDKYIFDSGSGGTNKTFNWSILKGSILENVILAGGINTDNVLIASQLNCSGLDFNSGVEKSPGIKDHKKISLIFKKLTF</sequence>
<gene>
    <name type="primary">trpC</name>
    <name type="synonym">trpC/F</name>
    <name type="ordered locus">BUsg_268</name>
</gene>
<comment type="function">
    <text evidence="1">Bifunctional enzyme that catalyzes two sequential steps of tryptophan biosynthetic pathway. The first reaction is catalyzed by the isomerase, coded by the TrpF domain; the second reaction is catalyzed by the synthase, coded by the TrpC domain (By similarity).</text>
</comment>
<comment type="catalytic activity">
    <reaction>
        <text>N-(5-phospho-beta-D-ribosyl)anthranilate = 1-(2-carboxyphenylamino)-1-deoxy-D-ribulose 5-phosphate</text>
        <dbReference type="Rhea" id="RHEA:21540"/>
        <dbReference type="ChEBI" id="CHEBI:18277"/>
        <dbReference type="ChEBI" id="CHEBI:58613"/>
        <dbReference type="EC" id="5.3.1.24"/>
    </reaction>
</comment>
<comment type="catalytic activity">
    <reaction>
        <text>1-(2-carboxyphenylamino)-1-deoxy-D-ribulose 5-phosphate + H(+) = (1S,2R)-1-C-(indol-3-yl)glycerol 3-phosphate + CO2 + H2O</text>
        <dbReference type="Rhea" id="RHEA:23476"/>
        <dbReference type="ChEBI" id="CHEBI:15377"/>
        <dbReference type="ChEBI" id="CHEBI:15378"/>
        <dbReference type="ChEBI" id="CHEBI:16526"/>
        <dbReference type="ChEBI" id="CHEBI:58613"/>
        <dbReference type="ChEBI" id="CHEBI:58866"/>
        <dbReference type="EC" id="4.1.1.48"/>
    </reaction>
</comment>
<comment type="pathway">
    <text>Amino-acid biosynthesis; L-tryptophan biosynthesis; L-tryptophan from chorismate: step 3/5.</text>
</comment>
<comment type="pathway">
    <text>Amino-acid biosynthesis; L-tryptophan biosynthesis; L-tryptophan from chorismate: step 4/5.</text>
</comment>
<comment type="subunit">
    <text evidence="1">Monomer.</text>
</comment>
<comment type="similarity">
    <text evidence="2">In the N-terminal section; belongs to the TrpC family.</text>
</comment>
<comment type="similarity">
    <text evidence="2">In the C-terminal section; belongs to the TrpF family.</text>
</comment>
<proteinExistence type="inferred from homology"/>
<evidence type="ECO:0000250" key="1"/>
<evidence type="ECO:0000305" key="2"/>
<protein>
    <recommendedName>
        <fullName>Tryptophan biosynthesis protein TrpCF</fullName>
    </recommendedName>
    <domain>
        <recommendedName>
            <fullName>Indole-3-glycerol phosphate synthase</fullName>
            <shortName>IGPS</shortName>
            <ecNumber>4.1.1.48</ecNumber>
        </recommendedName>
    </domain>
    <domain>
        <recommendedName>
            <fullName>N-(5'-phospho-ribosyl)anthranilate isomerase</fullName>
            <shortName>PRAI</shortName>
            <ecNumber>5.3.1.24</ecNumber>
        </recommendedName>
    </domain>
</protein>
<keyword id="KW-0028">Amino-acid biosynthesis</keyword>
<keyword id="KW-0057">Aromatic amino acid biosynthesis</keyword>
<keyword id="KW-0210">Decarboxylase</keyword>
<keyword id="KW-0413">Isomerase</keyword>
<keyword id="KW-0456">Lyase</keyword>
<keyword id="KW-0511">Multifunctional enzyme</keyword>
<keyword id="KW-0822">Tryptophan biosynthesis</keyword>